<dbReference type="EC" id="2.7.11.-" evidence="1"/>
<dbReference type="EC" id="2.7.4.-" evidence="1"/>
<dbReference type="EMBL" id="AP009351">
    <property type="protein sequence ID" value="BAF67000.1"/>
    <property type="molecule type" value="Genomic_DNA"/>
</dbReference>
<dbReference type="RefSeq" id="WP_000958224.1">
    <property type="nucleotide sequence ID" value="NZ_JBBIAE010000002.1"/>
</dbReference>
<dbReference type="SMR" id="A6QF68"/>
<dbReference type="KEGG" id="sae:NWMN_0728"/>
<dbReference type="HOGENOM" id="CLU_052030_0_1_9"/>
<dbReference type="Proteomes" id="UP000006386">
    <property type="component" value="Chromosome"/>
</dbReference>
<dbReference type="GO" id="GO:0005524">
    <property type="term" value="F:ATP binding"/>
    <property type="evidence" value="ECO:0007669"/>
    <property type="project" value="UniProtKB-UniRule"/>
</dbReference>
<dbReference type="GO" id="GO:0000287">
    <property type="term" value="F:magnesium ion binding"/>
    <property type="evidence" value="ECO:0007669"/>
    <property type="project" value="UniProtKB-UniRule"/>
</dbReference>
<dbReference type="GO" id="GO:0000155">
    <property type="term" value="F:phosphorelay sensor kinase activity"/>
    <property type="evidence" value="ECO:0007669"/>
    <property type="project" value="InterPro"/>
</dbReference>
<dbReference type="GO" id="GO:0004674">
    <property type="term" value="F:protein serine/threonine kinase activity"/>
    <property type="evidence" value="ECO:0007669"/>
    <property type="project" value="UniProtKB-KW"/>
</dbReference>
<dbReference type="GO" id="GO:0004712">
    <property type="term" value="F:protein serine/threonine/tyrosine kinase activity"/>
    <property type="evidence" value="ECO:0007669"/>
    <property type="project" value="UniProtKB-UniRule"/>
</dbReference>
<dbReference type="GO" id="GO:0006109">
    <property type="term" value="P:regulation of carbohydrate metabolic process"/>
    <property type="evidence" value="ECO:0007669"/>
    <property type="project" value="UniProtKB-UniRule"/>
</dbReference>
<dbReference type="CDD" id="cd01918">
    <property type="entry name" value="HprK_C"/>
    <property type="match status" value="1"/>
</dbReference>
<dbReference type="FunFam" id="3.40.1390.20:FF:000002">
    <property type="entry name" value="HPr kinase/phosphorylase"/>
    <property type="match status" value="1"/>
</dbReference>
<dbReference type="FunFam" id="3.40.50.300:FF:000174">
    <property type="entry name" value="HPr kinase/phosphorylase"/>
    <property type="match status" value="1"/>
</dbReference>
<dbReference type="Gene3D" id="3.40.1390.20">
    <property type="entry name" value="HprK N-terminal domain-like"/>
    <property type="match status" value="1"/>
</dbReference>
<dbReference type="Gene3D" id="3.40.50.300">
    <property type="entry name" value="P-loop containing nucleotide triphosphate hydrolases"/>
    <property type="match status" value="1"/>
</dbReference>
<dbReference type="HAMAP" id="MF_01249">
    <property type="entry name" value="HPr_kinase"/>
    <property type="match status" value="1"/>
</dbReference>
<dbReference type="InterPro" id="IPR003755">
    <property type="entry name" value="HPr(Ser)_kin/Pase"/>
</dbReference>
<dbReference type="InterPro" id="IPR011104">
    <property type="entry name" value="Hpr_kin/Pase_C"/>
</dbReference>
<dbReference type="InterPro" id="IPR011126">
    <property type="entry name" value="Hpr_kin/Pase_Hpr_N"/>
</dbReference>
<dbReference type="InterPro" id="IPR027417">
    <property type="entry name" value="P-loop_NTPase"/>
</dbReference>
<dbReference type="InterPro" id="IPR028979">
    <property type="entry name" value="Ser_kin/Pase_Hpr-like_N_sf"/>
</dbReference>
<dbReference type="NCBIfam" id="TIGR00679">
    <property type="entry name" value="hpr-ser"/>
    <property type="match status" value="1"/>
</dbReference>
<dbReference type="PANTHER" id="PTHR30305:SF1">
    <property type="entry name" value="HPR KINASE_PHOSPHORYLASE"/>
    <property type="match status" value="1"/>
</dbReference>
<dbReference type="PANTHER" id="PTHR30305">
    <property type="entry name" value="PROTEIN YJDM-RELATED"/>
    <property type="match status" value="1"/>
</dbReference>
<dbReference type="Pfam" id="PF07475">
    <property type="entry name" value="Hpr_kinase_C"/>
    <property type="match status" value="1"/>
</dbReference>
<dbReference type="Pfam" id="PF02603">
    <property type="entry name" value="Hpr_kinase_N"/>
    <property type="match status" value="1"/>
</dbReference>
<dbReference type="SUPFAM" id="SSF75138">
    <property type="entry name" value="HprK N-terminal domain-like"/>
    <property type="match status" value="1"/>
</dbReference>
<dbReference type="SUPFAM" id="SSF53795">
    <property type="entry name" value="PEP carboxykinase-like"/>
    <property type="match status" value="1"/>
</dbReference>
<accession>A6QF68</accession>
<evidence type="ECO:0000255" key="1">
    <source>
        <dbReference type="HAMAP-Rule" id="MF_01249"/>
    </source>
</evidence>
<comment type="function">
    <text evidence="1">Catalyzes the ATP- as well as the pyrophosphate-dependent phosphorylation of a specific serine residue in HPr, a phosphocarrier protein of the phosphoenolpyruvate-dependent sugar phosphotransferase system (PTS). HprK/P also catalyzes the pyrophosphate-producing, inorganic phosphate-dependent dephosphorylation (phosphorolysis) of seryl-phosphorylated HPr (P-Ser-HPr). The two antagonistic activities of HprK/P are regulated by several intracellular metabolites, which change their concentration in response to the absence or presence of rapidly metabolisable carbon sources (glucose, fructose, etc.) in the growth medium. Therefore, by controlling the phosphorylation state of HPr, HPrK/P is a sensor enzyme that plays a major role in the regulation of carbon metabolism and sugar transport: it mediates carbon catabolite repression (CCR), and regulates PTS-catalyzed carbohydrate uptake and inducer exclusion.</text>
</comment>
<comment type="catalytic activity">
    <reaction evidence="1">
        <text>[HPr protein]-L-serine + ATP = [HPr protein]-O-phospho-L-serine + ADP + H(+)</text>
        <dbReference type="Rhea" id="RHEA:46600"/>
        <dbReference type="Rhea" id="RHEA-COMP:11602"/>
        <dbReference type="Rhea" id="RHEA-COMP:11603"/>
        <dbReference type="ChEBI" id="CHEBI:15378"/>
        <dbReference type="ChEBI" id="CHEBI:29999"/>
        <dbReference type="ChEBI" id="CHEBI:30616"/>
        <dbReference type="ChEBI" id="CHEBI:83421"/>
        <dbReference type="ChEBI" id="CHEBI:456216"/>
    </reaction>
</comment>
<comment type="catalytic activity">
    <reaction evidence="1">
        <text>[HPr protein]-O-phospho-L-serine + phosphate + H(+) = [HPr protein]-L-serine + diphosphate</text>
        <dbReference type="Rhea" id="RHEA:46604"/>
        <dbReference type="Rhea" id="RHEA-COMP:11602"/>
        <dbReference type="Rhea" id="RHEA-COMP:11603"/>
        <dbReference type="ChEBI" id="CHEBI:15378"/>
        <dbReference type="ChEBI" id="CHEBI:29999"/>
        <dbReference type="ChEBI" id="CHEBI:33019"/>
        <dbReference type="ChEBI" id="CHEBI:43474"/>
        <dbReference type="ChEBI" id="CHEBI:83421"/>
    </reaction>
</comment>
<comment type="cofactor">
    <cofactor evidence="1">
        <name>Mg(2+)</name>
        <dbReference type="ChEBI" id="CHEBI:18420"/>
    </cofactor>
</comment>
<comment type="subunit">
    <text evidence="1">Homohexamer.</text>
</comment>
<comment type="domain">
    <text evidence="1">The Walker A ATP-binding motif also binds Pi and PPi.</text>
</comment>
<comment type="miscellaneous">
    <text evidence="1">Both phosphorylation and phosphorolysis are carried out by the same active site and suggest a common mechanism for both reactions.</text>
</comment>
<comment type="similarity">
    <text evidence="1">Belongs to the HPrK/P family.</text>
</comment>
<protein>
    <recommendedName>
        <fullName evidence="1">HPr kinase/phosphorylase</fullName>
        <shortName evidence="1">HPrK/P</shortName>
        <ecNumber evidence="1">2.7.11.-</ecNumber>
        <ecNumber evidence="1">2.7.4.-</ecNumber>
    </recommendedName>
    <alternativeName>
        <fullName evidence="1">HPr(Ser) kinase/phosphorylase</fullName>
    </alternativeName>
</protein>
<reference key="1">
    <citation type="journal article" date="2008" name="J. Bacteriol.">
        <title>Genome sequence of Staphylococcus aureus strain Newman and comparative analysis of staphylococcal genomes: polymorphism and evolution of two major pathogenicity islands.</title>
        <authorList>
            <person name="Baba T."/>
            <person name="Bae T."/>
            <person name="Schneewind O."/>
            <person name="Takeuchi F."/>
            <person name="Hiramatsu K."/>
        </authorList>
    </citation>
    <scope>NUCLEOTIDE SEQUENCE [LARGE SCALE GENOMIC DNA]</scope>
    <source>
        <strain>Newman</strain>
    </source>
</reference>
<sequence>MLTTEKLVETLKLDLIAGEEGLSKPIKNADISRPGLEMAGYFSHYASDRIQLLGTTELSFYNLLPDKDRAGRMRKLCRPETPAIIVTRGLQPPEELVEAAKELNTPLIVAKDATTSLMSRLTTFLEHALAKTTSLHGVLVDVYGVGVLITGDSGIGKSETALELVKRGHRLVADDNVEIRQINKDELIGKPPKLIEHLLEIRGLGIINVMTLFGAGSILTEKRIRLNINLENWNKQKLYDRVGLNEETLSILDTEITKKTIPVRPGRNVAVIIEVAAMNYRLNIMGINTAEEFSERLNEEIIKNSHKSEE</sequence>
<proteinExistence type="inferred from homology"/>
<name>HPRK_STAAE</name>
<organism>
    <name type="scientific">Staphylococcus aureus (strain Newman)</name>
    <dbReference type="NCBI Taxonomy" id="426430"/>
    <lineage>
        <taxon>Bacteria</taxon>
        <taxon>Bacillati</taxon>
        <taxon>Bacillota</taxon>
        <taxon>Bacilli</taxon>
        <taxon>Bacillales</taxon>
        <taxon>Staphylococcaceae</taxon>
        <taxon>Staphylococcus</taxon>
    </lineage>
</organism>
<gene>
    <name evidence="1" type="primary">hprK</name>
    <name type="ordered locus">NWMN_0728</name>
</gene>
<feature type="chain" id="PRO_1000073177" description="HPr kinase/phosphorylase">
    <location>
        <begin position="1"/>
        <end position="310"/>
    </location>
</feature>
<feature type="region of interest" description="Important for the catalytic mechanism of both phosphorylation and dephosphorylation" evidence="1">
    <location>
        <begin position="199"/>
        <end position="208"/>
    </location>
</feature>
<feature type="region of interest" description="Important for the catalytic mechanism of dephosphorylation" evidence="1">
    <location>
        <begin position="262"/>
        <end position="267"/>
    </location>
</feature>
<feature type="active site" evidence="1">
    <location>
        <position position="136"/>
    </location>
</feature>
<feature type="active site" evidence="1">
    <location>
        <position position="157"/>
    </location>
</feature>
<feature type="active site" description="Proton acceptor; for phosphorylation activity. Proton donor; for dephosphorylation activity" evidence="1">
    <location>
        <position position="175"/>
    </location>
</feature>
<feature type="active site" evidence="1">
    <location>
        <position position="241"/>
    </location>
</feature>
<feature type="binding site" evidence="1">
    <location>
        <begin position="151"/>
        <end position="158"/>
    </location>
    <ligand>
        <name>ATP</name>
        <dbReference type="ChEBI" id="CHEBI:30616"/>
    </ligand>
</feature>
<feature type="binding site" evidence="1">
    <location>
        <position position="158"/>
    </location>
    <ligand>
        <name>Mg(2+)</name>
        <dbReference type="ChEBI" id="CHEBI:18420"/>
    </ligand>
</feature>
<feature type="binding site" evidence="1">
    <location>
        <position position="200"/>
    </location>
    <ligand>
        <name>Mg(2+)</name>
        <dbReference type="ChEBI" id="CHEBI:18420"/>
    </ligand>
</feature>
<keyword id="KW-0067">ATP-binding</keyword>
<keyword id="KW-0119">Carbohydrate metabolism</keyword>
<keyword id="KW-0418">Kinase</keyword>
<keyword id="KW-0460">Magnesium</keyword>
<keyword id="KW-0479">Metal-binding</keyword>
<keyword id="KW-0511">Multifunctional enzyme</keyword>
<keyword id="KW-0547">Nucleotide-binding</keyword>
<keyword id="KW-0723">Serine/threonine-protein kinase</keyword>
<keyword id="KW-0808">Transferase</keyword>